<organism>
    <name type="scientific">Leptothrix cholodnii (strain ATCC 51168 / LMG 8142 / SP-6)</name>
    <name type="common">Leptothrix discophora (strain SP-6)</name>
    <dbReference type="NCBI Taxonomy" id="395495"/>
    <lineage>
        <taxon>Bacteria</taxon>
        <taxon>Pseudomonadati</taxon>
        <taxon>Pseudomonadota</taxon>
        <taxon>Betaproteobacteria</taxon>
        <taxon>Burkholderiales</taxon>
        <taxon>Sphaerotilaceae</taxon>
        <taxon>Leptothrix</taxon>
    </lineage>
</organism>
<gene>
    <name evidence="1" type="primary">tsf</name>
    <name type="ordered locus">Lcho_2849</name>
</gene>
<keyword id="KW-0963">Cytoplasm</keyword>
<keyword id="KW-0251">Elongation factor</keyword>
<keyword id="KW-0648">Protein biosynthesis</keyword>
<keyword id="KW-1185">Reference proteome</keyword>
<proteinExistence type="inferred from homology"/>
<dbReference type="EMBL" id="CP001013">
    <property type="protein sequence ID" value="ACB35114.1"/>
    <property type="molecule type" value="Genomic_DNA"/>
</dbReference>
<dbReference type="RefSeq" id="WP_012347868.1">
    <property type="nucleotide sequence ID" value="NC_010524.1"/>
</dbReference>
<dbReference type="SMR" id="B1XXJ4"/>
<dbReference type="STRING" id="395495.Lcho_2849"/>
<dbReference type="KEGG" id="lch:Lcho_2849"/>
<dbReference type="eggNOG" id="COG0264">
    <property type="taxonomic scope" value="Bacteria"/>
</dbReference>
<dbReference type="HOGENOM" id="CLU_047155_0_2_4"/>
<dbReference type="OrthoDB" id="9808348at2"/>
<dbReference type="Proteomes" id="UP000001693">
    <property type="component" value="Chromosome"/>
</dbReference>
<dbReference type="GO" id="GO:0005737">
    <property type="term" value="C:cytoplasm"/>
    <property type="evidence" value="ECO:0007669"/>
    <property type="project" value="UniProtKB-SubCell"/>
</dbReference>
<dbReference type="GO" id="GO:0003746">
    <property type="term" value="F:translation elongation factor activity"/>
    <property type="evidence" value="ECO:0007669"/>
    <property type="project" value="UniProtKB-UniRule"/>
</dbReference>
<dbReference type="CDD" id="cd14275">
    <property type="entry name" value="UBA_EF-Ts"/>
    <property type="match status" value="1"/>
</dbReference>
<dbReference type="FunFam" id="1.10.8.10:FF:000001">
    <property type="entry name" value="Elongation factor Ts"/>
    <property type="match status" value="1"/>
</dbReference>
<dbReference type="Gene3D" id="1.10.286.20">
    <property type="match status" value="1"/>
</dbReference>
<dbReference type="Gene3D" id="1.10.8.10">
    <property type="entry name" value="DNA helicase RuvA subunit, C-terminal domain"/>
    <property type="match status" value="1"/>
</dbReference>
<dbReference type="Gene3D" id="3.30.479.20">
    <property type="entry name" value="Elongation factor Ts, dimerisation domain"/>
    <property type="match status" value="2"/>
</dbReference>
<dbReference type="HAMAP" id="MF_00050">
    <property type="entry name" value="EF_Ts"/>
    <property type="match status" value="1"/>
</dbReference>
<dbReference type="InterPro" id="IPR036402">
    <property type="entry name" value="EF-Ts_dimer_sf"/>
</dbReference>
<dbReference type="InterPro" id="IPR001816">
    <property type="entry name" value="Transl_elong_EFTs/EF1B"/>
</dbReference>
<dbReference type="InterPro" id="IPR014039">
    <property type="entry name" value="Transl_elong_EFTs/EF1B_dimer"/>
</dbReference>
<dbReference type="InterPro" id="IPR018101">
    <property type="entry name" value="Transl_elong_Ts_CS"/>
</dbReference>
<dbReference type="InterPro" id="IPR009060">
    <property type="entry name" value="UBA-like_sf"/>
</dbReference>
<dbReference type="NCBIfam" id="TIGR00116">
    <property type="entry name" value="tsf"/>
    <property type="match status" value="1"/>
</dbReference>
<dbReference type="PANTHER" id="PTHR11741">
    <property type="entry name" value="ELONGATION FACTOR TS"/>
    <property type="match status" value="1"/>
</dbReference>
<dbReference type="PANTHER" id="PTHR11741:SF0">
    <property type="entry name" value="ELONGATION FACTOR TS, MITOCHONDRIAL"/>
    <property type="match status" value="1"/>
</dbReference>
<dbReference type="Pfam" id="PF00889">
    <property type="entry name" value="EF_TS"/>
    <property type="match status" value="1"/>
</dbReference>
<dbReference type="SUPFAM" id="SSF54713">
    <property type="entry name" value="Elongation factor Ts (EF-Ts), dimerisation domain"/>
    <property type="match status" value="2"/>
</dbReference>
<dbReference type="SUPFAM" id="SSF46934">
    <property type="entry name" value="UBA-like"/>
    <property type="match status" value="1"/>
</dbReference>
<dbReference type="PROSITE" id="PS01127">
    <property type="entry name" value="EF_TS_2"/>
    <property type="match status" value="1"/>
</dbReference>
<feature type="chain" id="PRO_1000116755" description="Elongation factor Ts">
    <location>
        <begin position="1"/>
        <end position="306"/>
    </location>
</feature>
<feature type="region of interest" description="Involved in Mg(2+) ion dislocation from EF-Tu" evidence="1">
    <location>
        <begin position="80"/>
        <end position="83"/>
    </location>
</feature>
<comment type="function">
    <text evidence="1">Associates with the EF-Tu.GDP complex and induces the exchange of GDP to GTP. It remains bound to the aminoacyl-tRNA.EF-Tu.GTP complex up to the GTP hydrolysis stage on the ribosome.</text>
</comment>
<comment type="subcellular location">
    <subcellularLocation>
        <location evidence="1">Cytoplasm</location>
    </subcellularLocation>
</comment>
<comment type="similarity">
    <text evidence="1">Belongs to the EF-Ts family.</text>
</comment>
<reference key="1">
    <citation type="submission" date="2008-03" db="EMBL/GenBank/DDBJ databases">
        <title>Complete sequence of Leptothrix cholodnii SP-6.</title>
        <authorList>
            <consortium name="US DOE Joint Genome Institute"/>
            <person name="Copeland A."/>
            <person name="Lucas S."/>
            <person name="Lapidus A."/>
            <person name="Glavina del Rio T."/>
            <person name="Dalin E."/>
            <person name="Tice H."/>
            <person name="Bruce D."/>
            <person name="Goodwin L."/>
            <person name="Pitluck S."/>
            <person name="Chertkov O."/>
            <person name="Brettin T."/>
            <person name="Detter J.C."/>
            <person name="Han C."/>
            <person name="Kuske C.R."/>
            <person name="Schmutz J."/>
            <person name="Larimer F."/>
            <person name="Land M."/>
            <person name="Hauser L."/>
            <person name="Kyrpides N."/>
            <person name="Lykidis A."/>
            <person name="Emerson D."/>
            <person name="Richardson P."/>
        </authorList>
    </citation>
    <scope>NUCLEOTIDE SEQUENCE [LARGE SCALE GENOMIC DNA]</scope>
    <source>
        <strain>ATCC 51168 / LMG 8142 / SP-6</strain>
    </source>
</reference>
<sequence>MATITAKMVGDLRAKTDAPMMECKKALTEADGNMEKAEELLRVKLGNKASKAASRVTAEGVVASAVSGSTGALIEVNCETDFVSKNDSFLAFVQACVNLVVEHNPADVAALSALPLAMEDFGPTVEDVRKGLIGKIGENLAIRRFKRYGDGGSLAHYLHGVRIGVMVEYSGDAVAAKDVAMHIAAMKPVSLTSADVSADLIEKERAVAAGKAAEDAKAAEAAGKPAQSAEIVAKRIEGSIQKFLKEVSLFNQTFVKNDKQTVEQMLKAAGTTVKGFTMYVVGEGIEKKQDDFAAEVAAQVAAAKGQ</sequence>
<name>EFTS_LEPCP</name>
<evidence type="ECO:0000255" key="1">
    <source>
        <dbReference type="HAMAP-Rule" id="MF_00050"/>
    </source>
</evidence>
<protein>
    <recommendedName>
        <fullName evidence="1">Elongation factor Ts</fullName>
        <shortName evidence="1">EF-Ts</shortName>
    </recommendedName>
</protein>
<accession>B1XXJ4</accession>